<gene>
    <name type="primary">Vha14-1</name>
    <name type="synonym">Vha14</name>
    <name type="ORF">CG8210</name>
</gene>
<feature type="chain" id="PRO_0000144805" description="V-type proton ATPase subunit F 1">
    <location>
        <begin position="1"/>
        <end position="124"/>
    </location>
</feature>
<feature type="modified residue" description="Phosphoserine" evidence="3">
    <location>
        <position position="87"/>
    </location>
</feature>
<accession>Q24583</accession>
<accession>C4XVH6</accession>
<accession>Q9V7E2</accession>
<comment type="function">
    <text evidence="1 2">Subunit of the V1 complex of vacuolar(H+)-ATPase (V-ATPase), a multisubunit enzyme composed of a peripheral complex (V1) that hydrolyzes ATP and a membrane integral complex (V0) that translocates protons (By similarity). V-ATPase is responsible for acidifying and maintaining the pH of intracellular compartments and in some cell types, is targeted to the plasma membrane, where it is responsible for acidifying the extracellular environment (By similarity).</text>
</comment>
<comment type="subunit">
    <text evidence="1">V-ATPase is a heteromultimeric enzyme made up of two complexes: the ATP-hydrolytic V1 complex and the proton translocation V0 complex (By similarity). The V1 complex consists of three catalytic AB heterodimers that form a heterohexamer, three peripheral stalks each consisting of EG heterodimers, one central rotor including subunits D and F, and the regulatory subunits C and H (By similarity). The proton translocation complex V0 consists of the proton transport subunit a, a ring of proteolipid subunits c9c'', rotary subunit d, subunits e and f, and the accessory subunits VhaAC45 and ATP6AP2 (By similarity).</text>
</comment>
<comment type="similarity">
    <text evidence="4">Belongs to the V-ATPase F subunit family.</text>
</comment>
<name>VATF1_DROME</name>
<keyword id="KW-0375">Hydrogen ion transport</keyword>
<keyword id="KW-0406">Ion transport</keyword>
<keyword id="KW-0597">Phosphoprotein</keyword>
<keyword id="KW-1185">Reference proteome</keyword>
<keyword id="KW-0813">Transport</keyword>
<protein>
    <recommendedName>
        <fullName>V-type proton ATPase subunit F 1</fullName>
        <shortName>V-ATPase subunit F 1</shortName>
    </recommendedName>
    <alternativeName>
        <fullName>V-ATPase 14 kDa subunit</fullName>
    </alternativeName>
    <alternativeName>
        <fullName>Vacuolar H+ ATPase subunit 14-1</fullName>
    </alternativeName>
    <alternativeName>
        <fullName>Vacuolar proton pump subunit F 1</fullName>
    </alternativeName>
</protein>
<reference key="1">
    <citation type="journal article" date="1996" name="Gene">
        <title>The Drosophila melanogaster gene vha14 encoding a 14-kDa F-subunit of the vacuolar ATPase.</title>
        <authorList>
            <person name="Guo Y."/>
            <person name="Kaiser K."/>
            <person name="Wieczorek H."/>
            <person name="Dow J.A.T."/>
        </authorList>
    </citation>
    <scope>NUCLEOTIDE SEQUENCE [MRNA]</scope>
    <source>
        <strain>Oregon-R</strain>
        <tissue>Head</tissue>
    </source>
</reference>
<reference key="2">
    <citation type="journal article" date="2000" name="Science">
        <title>The genome sequence of Drosophila melanogaster.</title>
        <authorList>
            <person name="Adams M.D."/>
            <person name="Celniker S.E."/>
            <person name="Holt R.A."/>
            <person name="Evans C.A."/>
            <person name="Gocayne J.D."/>
            <person name="Amanatides P.G."/>
            <person name="Scherer S.E."/>
            <person name="Li P.W."/>
            <person name="Hoskins R.A."/>
            <person name="Galle R.F."/>
            <person name="George R.A."/>
            <person name="Lewis S.E."/>
            <person name="Richards S."/>
            <person name="Ashburner M."/>
            <person name="Henderson S.N."/>
            <person name="Sutton G.G."/>
            <person name="Wortman J.R."/>
            <person name="Yandell M.D."/>
            <person name="Zhang Q."/>
            <person name="Chen L.X."/>
            <person name="Brandon R.C."/>
            <person name="Rogers Y.-H.C."/>
            <person name="Blazej R.G."/>
            <person name="Champe M."/>
            <person name="Pfeiffer B.D."/>
            <person name="Wan K.H."/>
            <person name="Doyle C."/>
            <person name="Baxter E.G."/>
            <person name="Helt G."/>
            <person name="Nelson C.R."/>
            <person name="Miklos G.L.G."/>
            <person name="Abril J.F."/>
            <person name="Agbayani A."/>
            <person name="An H.-J."/>
            <person name="Andrews-Pfannkoch C."/>
            <person name="Baldwin D."/>
            <person name="Ballew R.M."/>
            <person name="Basu A."/>
            <person name="Baxendale J."/>
            <person name="Bayraktaroglu L."/>
            <person name="Beasley E.M."/>
            <person name="Beeson K.Y."/>
            <person name="Benos P.V."/>
            <person name="Berman B.P."/>
            <person name="Bhandari D."/>
            <person name="Bolshakov S."/>
            <person name="Borkova D."/>
            <person name="Botchan M.R."/>
            <person name="Bouck J."/>
            <person name="Brokstein P."/>
            <person name="Brottier P."/>
            <person name="Burtis K.C."/>
            <person name="Busam D.A."/>
            <person name="Butler H."/>
            <person name="Cadieu E."/>
            <person name="Center A."/>
            <person name="Chandra I."/>
            <person name="Cherry J.M."/>
            <person name="Cawley S."/>
            <person name="Dahlke C."/>
            <person name="Davenport L.B."/>
            <person name="Davies P."/>
            <person name="de Pablos B."/>
            <person name="Delcher A."/>
            <person name="Deng Z."/>
            <person name="Mays A.D."/>
            <person name="Dew I."/>
            <person name="Dietz S.M."/>
            <person name="Dodson K."/>
            <person name="Doup L.E."/>
            <person name="Downes M."/>
            <person name="Dugan-Rocha S."/>
            <person name="Dunkov B.C."/>
            <person name="Dunn P."/>
            <person name="Durbin K.J."/>
            <person name="Evangelista C.C."/>
            <person name="Ferraz C."/>
            <person name="Ferriera S."/>
            <person name="Fleischmann W."/>
            <person name="Fosler C."/>
            <person name="Gabrielian A.E."/>
            <person name="Garg N.S."/>
            <person name="Gelbart W.M."/>
            <person name="Glasser K."/>
            <person name="Glodek A."/>
            <person name="Gong F."/>
            <person name="Gorrell J.H."/>
            <person name="Gu Z."/>
            <person name="Guan P."/>
            <person name="Harris M."/>
            <person name="Harris N.L."/>
            <person name="Harvey D.A."/>
            <person name="Heiman T.J."/>
            <person name="Hernandez J.R."/>
            <person name="Houck J."/>
            <person name="Hostin D."/>
            <person name="Houston K.A."/>
            <person name="Howland T.J."/>
            <person name="Wei M.-H."/>
            <person name="Ibegwam C."/>
            <person name="Jalali M."/>
            <person name="Kalush F."/>
            <person name="Karpen G.H."/>
            <person name="Ke Z."/>
            <person name="Kennison J.A."/>
            <person name="Ketchum K.A."/>
            <person name="Kimmel B.E."/>
            <person name="Kodira C.D."/>
            <person name="Kraft C.L."/>
            <person name="Kravitz S."/>
            <person name="Kulp D."/>
            <person name="Lai Z."/>
            <person name="Lasko P."/>
            <person name="Lei Y."/>
            <person name="Levitsky A.A."/>
            <person name="Li J.H."/>
            <person name="Li Z."/>
            <person name="Liang Y."/>
            <person name="Lin X."/>
            <person name="Liu X."/>
            <person name="Mattei B."/>
            <person name="McIntosh T.C."/>
            <person name="McLeod M.P."/>
            <person name="McPherson D."/>
            <person name="Merkulov G."/>
            <person name="Milshina N.V."/>
            <person name="Mobarry C."/>
            <person name="Morris J."/>
            <person name="Moshrefi A."/>
            <person name="Mount S.M."/>
            <person name="Moy M."/>
            <person name="Murphy B."/>
            <person name="Murphy L."/>
            <person name="Muzny D.M."/>
            <person name="Nelson D.L."/>
            <person name="Nelson D.R."/>
            <person name="Nelson K.A."/>
            <person name="Nixon K."/>
            <person name="Nusskern D.R."/>
            <person name="Pacleb J.M."/>
            <person name="Palazzolo M."/>
            <person name="Pittman G.S."/>
            <person name="Pan S."/>
            <person name="Pollard J."/>
            <person name="Puri V."/>
            <person name="Reese M.G."/>
            <person name="Reinert K."/>
            <person name="Remington K."/>
            <person name="Saunders R.D.C."/>
            <person name="Scheeler F."/>
            <person name="Shen H."/>
            <person name="Shue B.C."/>
            <person name="Siden-Kiamos I."/>
            <person name="Simpson M."/>
            <person name="Skupski M.P."/>
            <person name="Smith T.J."/>
            <person name="Spier E."/>
            <person name="Spradling A.C."/>
            <person name="Stapleton M."/>
            <person name="Strong R."/>
            <person name="Sun E."/>
            <person name="Svirskas R."/>
            <person name="Tector C."/>
            <person name="Turner R."/>
            <person name="Venter E."/>
            <person name="Wang A.H."/>
            <person name="Wang X."/>
            <person name="Wang Z.-Y."/>
            <person name="Wassarman D.A."/>
            <person name="Weinstock G.M."/>
            <person name="Weissenbach J."/>
            <person name="Williams S.M."/>
            <person name="Woodage T."/>
            <person name="Worley K.C."/>
            <person name="Wu D."/>
            <person name="Yang S."/>
            <person name="Yao Q.A."/>
            <person name="Ye J."/>
            <person name="Yeh R.-F."/>
            <person name="Zaveri J.S."/>
            <person name="Zhan M."/>
            <person name="Zhang G."/>
            <person name="Zhao Q."/>
            <person name="Zheng L."/>
            <person name="Zheng X.H."/>
            <person name="Zhong F.N."/>
            <person name="Zhong W."/>
            <person name="Zhou X."/>
            <person name="Zhu S.C."/>
            <person name="Zhu X."/>
            <person name="Smith H.O."/>
            <person name="Gibbs R.A."/>
            <person name="Myers E.W."/>
            <person name="Rubin G.M."/>
            <person name="Venter J.C."/>
        </authorList>
    </citation>
    <scope>NUCLEOTIDE SEQUENCE [LARGE SCALE GENOMIC DNA]</scope>
    <source>
        <strain>Berkeley</strain>
    </source>
</reference>
<reference key="3">
    <citation type="journal article" date="2002" name="Genome Biol.">
        <title>Annotation of the Drosophila melanogaster euchromatic genome: a systematic review.</title>
        <authorList>
            <person name="Misra S."/>
            <person name="Crosby M.A."/>
            <person name="Mungall C.J."/>
            <person name="Matthews B.B."/>
            <person name="Campbell K.S."/>
            <person name="Hradecky P."/>
            <person name="Huang Y."/>
            <person name="Kaminker J.S."/>
            <person name="Millburn G.H."/>
            <person name="Prochnik S.E."/>
            <person name="Smith C.D."/>
            <person name="Tupy J.L."/>
            <person name="Whitfield E.J."/>
            <person name="Bayraktaroglu L."/>
            <person name="Berman B.P."/>
            <person name="Bettencourt B.R."/>
            <person name="Celniker S.E."/>
            <person name="de Grey A.D.N.J."/>
            <person name="Drysdale R.A."/>
            <person name="Harris N.L."/>
            <person name="Richter J."/>
            <person name="Russo S."/>
            <person name="Schroeder A.J."/>
            <person name="Shu S.Q."/>
            <person name="Stapleton M."/>
            <person name="Yamada C."/>
            <person name="Ashburner M."/>
            <person name="Gelbart W.M."/>
            <person name="Rubin G.M."/>
            <person name="Lewis S.E."/>
        </authorList>
    </citation>
    <scope>GENOME REANNOTATION</scope>
    <source>
        <strain>Berkeley</strain>
    </source>
</reference>
<reference key="4">
    <citation type="submission" date="2009-06" db="EMBL/GenBank/DDBJ databases">
        <authorList>
            <person name="Carlson J.W."/>
            <person name="Booth B."/>
            <person name="Frise E."/>
            <person name="Park S."/>
            <person name="Wan K.H."/>
            <person name="Yu C."/>
            <person name="Celniker S.E."/>
        </authorList>
    </citation>
    <scope>NUCLEOTIDE SEQUENCE [LARGE SCALE MRNA]</scope>
    <source>
        <strain>Berkeley</strain>
        <tissue>Embryo</tissue>
    </source>
</reference>
<reference key="5">
    <citation type="journal article" date="2008" name="J. Proteome Res.">
        <title>Phosphoproteome analysis of Drosophila melanogaster embryos.</title>
        <authorList>
            <person name="Zhai B."/>
            <person name="Villen J."/>
            <person name="Beausoleil S.A."/>
            <person name="Mintseris J."/>
            <person name="Gygi S.P."/>
        </authorList>
    </citation>
    <scope>PHOSPHORYLATION [LARGE SCALE ANALYSIS] AT SER-87</scope>
    <scope>IDENTIFICATION BY MASS SPECTROMETRY</scope>
    <source>
        <tissue>Embryo</tissue>
    </source>
</reference>
<dbReference type="EMBL" id="Z26918">
    <property type="protein sequence ID" value="CAA81541.1"/>
    <property type="molecule type" value="mRNA"/>
</dbReference>
<dbReference type="EMBL" id="AE013599">
    <property type="protein sequence ID" value="AAF58115.1"/>
    <property type="molecule type" value="Genomic_DNA"/>
</dbReference>
<dbReference type="EMBL" id="BT088780">
    <property type="protein sequence ID" value="ACR82505.1"/>
    <property type="molecule type" value="mRNA"/>
</dbReference>
<dbReference type="PIR" id="JC4849">
    <property type="entry name" value="JC4849"/>
</dbReference>
<dbReference type="RefSeq" id="NP_476969.1">
    <property type="nucleotide sequence ID" value="NM_057621.5"/>
</dbReference>
<dbReference type="SMR" id="Q24583"/>
<dbReference type="BioGRID" id="62464">
    <property type="interactions" value="15"/>
</dbReference>
<dbReference type="DIP" id="DIP-22853N"/>
<dbReference type="FunCoup" id="Q24583">
    <property type="interactions" value="1426"/>
</dbReference>
<dbReference type="STRING" id="7227.FBpp0086474"/>
<dbReference type="iPTMnet" id="Q24583"/>
<dbReference type="PaxDb" id="7227-FBpp0086474"/>
<dbReference type="DNASU" id="36731"/>
<dbReference type="EnsemblMetazoa" id="FBtr0087341">
    <property type="protein sequence ID" value="FBpp0086474"/>
    <property type="gene ID" value="FBgn0262512"/>
</dbReference>
<dbReference type="GeneID" id="36731"/>
<dbReference type="KEGG" id="dme:Dmel_CG8210"/>
<dbReference type="AGR" id="FB:FBgn0262512"/>
<dbReference type="CTD" id="36731"/>
<dbReference type="FlyBase" id="FBgn0262512">
    <property type="gene designation" value="Vha14-1"/>
</dbReference>
<dbReference type="VEuPathDB" id="VectorBase:FBgn0262512"/>
<dbReference type="eggNOG" id="KOG3432">
    <property type="taxonomic scope" value="Eukaryota"/>
</dbReference>
<dbReference type="GeneTree" id="ENSGT00390000013208"/>
<dbReference type="HOGENOM" id="CLU_135754_0_0_1"/>
<dbReference type="InParanoid" id="Q24583"/>
<dbReference type="OMA" id="IIICQHI"/>
<dbReference type="OrthoDB" id="10261947at2759"/>
<dbReference type="PhylomeDB" id="Q24583"/>
<dbReference type="Reactome" id="R-DME-1222556">
    <property type="pathway name" value="ROS and RNS production in phagocytes"/>
</dbReference>
<dbReference type="Reactome" id="R-DME-77387">
    <property type="pathway name" value="Insulin receptor recycling"/>
</dbReference>
<dbReference type="Reactome" id="R-DME-917977">
    <property type="pathway name" value="Transferrin endocytosis and recycling"/>
</dbReference>
<dbReference type="Reactome" id="R-DME-9639288">
    <property type="pathway name" value="Amino acids regulate mTORC1"/>
</dbReference>
<dbReference type="Reactome" id="R-DME-983712">
    <property type="pathway name" value="Ion channel transport"/>
</dbReference>
<dbReference type="BioGRID-ORCS" id="36731">
    <property type="hits" value="0 hits in 1 CRISPR screen"/>
</dbReference>
<dbReference type="GenomeRNAi" id="36731"/>
<dbReference type="PRO" id="PR:Q24583"/>
<dbReference type="Proteomes" id="UP000000803">
    <property type="component" value="Chromosome 2R"/>
</dbReference>
<dbReference type="Bgee" id="FBgn0262512">
    <property type="expression patterns" value="Expressed in adult Malpighian tubule (Drosophila) and 262 other cell types or tissues"/>
</dbReference>
<dbReference type="ExpressionAtlas" id="Q24583">
    <property type="expression patterns" value="baseline and differential"/>
</dbReference>
<dbReference type="GO" id="GO:0016020">
    <property type="term" value="C:membrane"/>
    <property type="evidence" value="ECO:0000318"/>
    <property type="project" value="GO_Central"/>
</dbReference>
<dbReference type="GO" id="GO:0033181">
    <property type="term" value="C:plasma membrane proton-transporting V-type ATPase complex"/>
    <property type="evidence" value="ECO:0000315"/>
    <property type="project" value="FlyBase"/>
</dbReference>
<dbReference type="GO" id="GO:0000221">
    <property type="term" value="C:vacuolar proton-transporting V-type ATPase, V1 domain"/>
    <property type="evidence" value="ECO:0000250"/>
    <property type="project" value="FlyBase"/>
</dbReference>
<dbReference type="GO" id="GO:0046961">
    <property type="term" value="F:proton-transporting ATPase activity, rotational mechanism"/>
    <property type="evidence" value="ECO:0007669"/>
    <property type="project" value="InterPro"/>
</dbReference>
<dbReference type="GO" id="GO:1902600">
    <property type="term" value="P:proton transmembrane transport"/>
    <property type="evidence" value="ECO:0000305"/>
    <property type="project" value="FlyBase"/>
</dbReference>
<dbReference type="FunFam" id="3.40.50.10580:FF:000001">
    <property type="entry name" value="V-type proton ATPase subunit F"/>
    <property type="match status" value="1"/>
</dbReference>
<dbReference type="Gene3D" id="3.40.50.10580">
    <property type="entry name" value="ATPase, V1 complex, subunit F"/>
    <property type="match status" value="1"/>
</dbReference>
<dbReference type="InterPro" id="IPR008218">
    <property type="entry name" value="ATPase_V1-cplx_f_g_su"/>
</dbReference>
<dbReference type="InterPro" id="IPR005772">
    <property type="entry name" value="ATPase_V1-cplx_fsu_euk"/>
</dbReference>
<dbReference type="InterPro" id="IPR036906">
    <property type="entry name" value="ATPase_V1_fsu_sf"/>
</dbReference>
<dbReference type="NCBIfam" id="TIGR01101">
    <property type="entry name" value="V_ATP_synt_F"/>
    <property type="match status" value="1"/>
</dbReference>
<dbReference type="PANTHER" id="PTHR13861:SF2">
    <property type="entry name" value="V-TYPE PROTON ATPASE SUBUNIT F"/>
    <property type="match status" value="1"/>
</dbReference>
<dbReference type="PANTHER" id="PTHR13861">
    <property type="entry name" value="VACUOLAR ATP SYNTHASE SUBUNIT F"/>
    <property type="match status" value="1"/>
</dbReference>
<dbReference type="Pfam" id="PF01990">
    <property type="entry name" value="ATP-synt_F"/>
    <property type="match status" value="1"/>
</dbReference>
<dbReference type="PIRSF" id="PIRSF015945">
    <property type="entry name" value="ATPase_V1_F_euk"/>
    <property type="match status" value="1"/>
</dbReference>
<dbReference type="SUPFAM" id="SSF159468">
    <property type="entry name" value="AtpF-like"/>
    <property type="match status" value="1"/>
</dbReference>
<sequence length="124" mass="13850">MALHSAIKGKLISVIGDEDTCVGFLLGGVGEINKNRHPNFMVVDKNTAVSELEDCFKRFLKRDDIDIILINQNCAELIRHVIDAHTSPVPAVLEIPSKDHPYDASKDSILRRARGMFNPEDLVR</sequence>
<organism>
    <name type="scientific">Drosophila melanogaster</name>
    <name type="common">Fruit fly</name>
    <dbReference type="NCBI Taxonomy" id="7227"/>
    <lineage>
        <taxon>Eukaryota</taxon>
        <taxon>Metazoa</taxon>
        <taxon>Ecdysozoa</taxon>
        <taxon>Arthropoda</taxon>
        <taxon>Hexapoda</taxon>
        <taxon>Insecta</taxon>
        <taxon>Pterygota</taxon>
        <taxon>Neoptera</taxon>
        <taxon>Endopterygota</taxon>
        <taxon>Diptera</taxon>
        <taxon>Brachycera</taxon>
        <taxon>Muscomorpha</taxon>
        <taxon>Ephydroidea</taxon>
        <taxon>Drosophilidae</taxon>
        <taxon>Drosophila</taxon>
        <taxon>Sophophora</taxon>
    </lineage>
</organism>
<proteinExistence type="evidence at protein level"/>
<evidence type="ECO:0000250" key="1">
    <source>
        <dbReference type="UniProtKB" id="Q16864"/>
    </source>
</evidence>
<evidence type="ECO:0000250" key="2">
    <source>
        <dbReference type="UniProtKB" id="Q28029"/>
    </source>
</evidence>
<evidence type="ECO:0000269" key="3">
    <source>
    </source>
</evidence>
<evidence type="ECO:0000305" key="4"/>